<organism>
    <name type="scientific">Shigella flexneri serotype 5b (strain 8401)</name>
    <dbReference type="NCBI Taxonomy" id="373384"/>
    <lineage>
        <taxon>Bacteria</taxon>
        <taxon>Pseudomonadati</taxon>
        <taxon>Pseudomonadota</taxon>
        <taxon>Gammaproteobacteria</taxon>
        <taxon>Enterobacterales</taxon>
        <taxon>Enterobacteriaceae</taxon>
        <taxon>Shigella</taxon>
    </lineage>
</organism>
<evidence type="ECO:0000255" key="1">
    <source>
        <dbReference type="HAMAP-Rule" id="MF_01166"/>
    </source>
</evidence>
<comment type="function">
    <text evidence="1">Bifunctional enzyme that catalyzes the oxidative decarboxylation of UDP-glucuronic acid (UDP-GlcUA) to UDP-4-keto-arabinose (UDP-Ara4O) and the addition of a formyl group to UDP-4-amino-4-deoxy-L-arabinose (UDP-L-Ara4N) to form UDP-L-4-formamido-arabinose (UDP-L-Ara4FN). The modified arabinose is attached to lipid A and is required for resistance to polymyxin and cationic antimicrobial peptides.</text>
</comment>
<comment type="catalytic activity">
    <reaction evidence="1">
        <text>UDP-alpha-D-glucuronate + NAD(+) = UDP-beta-L-threo-pentopyranos-4-ulose + CO2 + NADH</text>
        <dbReference type="Rhea" id="RHEA:24702"/>
        <dbReference type="ChEBI" id="CHEBI:16526"/>
        <dbReference type="ChEBI" id="CHEBI:57540"/>
        <dbReference type="ChEBI" id="CHEBI:57945"/>
        <dbReference type="ChEBI" id="CHEBI:58052"/>
        <dbReference type="ChEBI" id="CHEBI:58710"/>
        <dbReference type="EC" id="1.1.1.305"/>
    </reaction>
</comment>
<comment type="catalytic activity">
    <reaction evidence="1">
        <text>UDP-4-amino-4-deoxy-beta-L-arabinose + (6R)-10-formyltetrahydrofolate = UDP-4-deoxy-4-formamido-beta-L-arabinose + (6S)-5,6,7,8-tetrahydrofolate + H(+)</text>
        <dbReference type="Rhea" id="RHEA:24706"/>
        <dbReference type="ChEBI" id="CHEBI:15378"/>
        <dbReference type="ChEBI" id="CHEBI:57453"/>
        <dbReference type="ChEBI" id="CHEBI:58708"/>
        <dbReference type="ChEBI" id="CHEBI:58709"/>
        <dbReference type="ChEBI" id="CHEBI:195366"/>
        <dbReference type="EC" id="2.1.2.13"/>
    </reaction>
</comment>
<comment type="pathway">
    <text evidence="1">Nucleotide-sugar biosynthesis; UDP-4-deoxy-4-formamido-beta-L-arabinose biosynthesis; UDP-4-deoxy-4-formamido-beta-L-arabinose from UDP-alpha-D-glucuronate: step 1/3.</text>
</comment>
<comment type="pathway">
    <text evidence="1">Nucleotide-sugar biosynthesis; UDP-4-deoxy-4-formamido-beta-L-arabinose biosynthesis; UDP-4-deoxy-4-formamido-beta-L-arabinose from UDP-alpha-D-glucuronate: step 3/3.</text>
</comment>
<comment type="pathway">
    <text evidence="1">Bacterial outer membrane biogenesis; lipopolysaccharide biosynthesis.</text>
</comment>
<comment type="subunit">
    <text evidence="1">Homohexamer, formed by a dimer of trimers.</text>
</comment>
<comment type="similarity">
    <text evidence="1">In the N-terminal section; belongs to the Fmt family. UDP-L-Ara4N formyltransferase subfamily.</text>
</comment>
<comment type="similarity">
    <text evidence="1">In the C-terminal section; belongs to the NAD(P)-dependent epimerase/dehydratase family. UDP-glucuronic acid decarboxylase subfamily.</text>
</comment>
<accession>Q0T2M8</accession>
<protein>
    <recommendedName>
        <fullName evidence="1">Bifunctional polymyxin resistance protein ArnA</fullName>
    </recommendedName>
    <domain>
        <recommendedName>
            <fullName evidence="1">UDP-4-amino-4-deoxy-L-arabinose formyltransferase</fullName>
            <ecNumber evidence="1">2.1.2.13</ecNumber>
        </recommendedName>
        <alternativeName>
            <fullName evidence="1">ArnAFT</fullName>
        </alternativeName>
        <alternativeName>
            <fullName evidence="1">UDP-L-Ara4N formyltransferase</fullName>
        </alternativeName>
    </domain>
    <domain>
        <recommendedName>
            <fullName evidence="1">UDP-glucuronic acid oxidase, UDP-4-keto-hexauronic acid decarboxylating</fullName>
            <ecNumber evidence="1">1.1.1.305</ecNumber>
        </recommendedName>
        <alternativeName>
            <fullName evidence="1">ArnADH</fullName>
        </alternativeName>
        <alternativeName>
            <fullName evidence="1">UDP-GlcUA decarboxylase</fullName>
        </alternativeName>
        <alternativeName>
            <fullName evidence="1">UDP-glucuronic acid dehydrogenase</fullName>
        </alternativeName>
    </domain>
</protein>
<gene>
    <name evidence="1" type="primary">arnA</name>
    <name type="ordered locus">SFV_2325</name>
</gene>
<reference key="1">
    <citation type="journal article" date="2006" name="BMC Genomics">
        <title>Complete genome sequence of Shigella flexneri 5b and comparison with Shigella flexneri 2a.</title>
        <authorList>
            <person name="Nie H."/>
            <person name="Yang F."/>
            <person name="Zhang X."/>
            <person name="Yang J."/>
            <person name="Chen L."/>
            <person name="Wang J."/>
            <person name="Xiong Z."/>
            <person name="Peng J."/>
            <person name="Sun L."/>
            <person name="Dong J."/>
            <person name="Xue Y."/>
            <person name="Xu X."/>
            <person name="Chen S."/>
            <person name="Yao Z."/>
            <person name="Shen Y."/>
            <person name="Jin Q."/>
        </authorList>
    </citation>
    <scope>NUCLEOTIDE SEQUENCE [LARGE SCALE GENOMIC DNA]</scope>
    <source>
        <strain>8401</strain>
    </source>
</reference>
<sequence>MKTVVFAYHDMGCLGIEALLAAGYEISAIFTHTDNPGEKAFYGSVAHLAAERDIPVYAPDNVNHPLWVERIAQLSPEVIFSFYYRHLICDEIFQLAPAGAFNLHGSLLPKYRGRAPLNWVLVNGETETGVTLHRMVKRADAGAIVAQLRVAIAPDDIAITLHHKLCHAARQLLEQTLPAIKHGNILEIAQRENEATCFGRRTPDDSFLEWHKPASVLHNMVRAVADPWPGAFSYVGNQKFTVWSSRVHPHASKAQPGSVISVAPLLIACGDGALEIVTGQAGDGITMQGSQLAQMLGLVQGSRLNSQPACTARRRTRVLILGVNGFIGNHLTERLLREDHYEVYGLDIGSDAISRFLNHPHFHFVEGDISIHSEWIEYHVKKCDVVLPLVAIATPIEYTRNPLRVFELDFEENLRIIRYCVKYRKRIIFPSTSEVYGMCSDKYFDEDHSNLIVGPVNKPRWIYSVSKQLLDRVIWAYGEKEGLQFTLFLPFNWMGPRLDNLNAARIGSSRAITQLILNLVEGSPIKLIDGGKQKRCFTDIRDGIEALYRIIENAGNRCDGEIINIGNPENEASIEELGEMLLASFEKHPLRHHFPPFAGFRVVESSCYYGKGYQDVEHRKPSIRNAHRCLDWEPKIDMQETIDETLDFFLRTVDLTDKPS</sequence>
<feature type="chain" id="PRO_0000281729" description="Bifunctional polymyxin resistance protein ArnA">
    <location>
        <begin position="1"/>
        <end position="660"/>
    </location>
</feature>
<feature type="region of interest" description="Formyltransferase ArnAFT">
    <location>
        <begin position="1"/>
        <end position="304"/>
    </location>
</feature>
<feature type="region of interest" description="Dehydrogenase ArnADH">
    <location>
        <begin position="314"/>
        <end position="660"/>
    </location>
</feature>
<feature type="active site" description="Proton donor; for formyltransferase activity" evidence="1">
    <location>
        <position position="104"/>
    </location>
</feature>
<feature type="active site" description="Proton acceptor; for decarboxylase activity" evidence="1">
    <location>
        <position position="434"/>
    </location>
</feature>
<feature type="active site" description="Proton donor; for decarboxylase activity" evidence="1">
    <location>
        <position position="619"/>
    </location>
</feature>
<feature type="binding site" evidence="1">
    <location>
        <begin position="86"/>
        <end position="88"/>
    </location>
    <ligand>
        <name>(6R)-10-formyltetrahydrofolate</name>
        <dbReference type="ChEBI" id="CHEBI:195366"/>
    </ligand>
</feature>
<feature type="binding site" evidence="1">
    <location>
        <position position="114"/>
    </location>
    <ligand>
        <name>(6R)-10-formyltetrahydrofolate</name>
        <dbReference type="ChEBI" id="CHEBI:195366"/>
    </ligand>
</feature>
<feature type="binding site" evidence="1">
    <location>
        <begin position="136"/>
        <end position="140"/>
    </location>
    <ligand>
        <name>(6R)-10-formyltetrahydrofolate</name>
        <dbReference type="ChEBI" id="CHEBI:195366"/>
    </ligand>
</feature>
<feature type="binding site" evidence="1">
    <location>
        <position position="347"/>
    </location>
    <ligand>
        <name>NAD(+)</name>
        <dbReference type="ChEBI" id="CHEBI:57540"/>
    </ligand>
</feature>
<feature type="binding site" evidence="1">
    <location>
        <begin position="368"/>
        <end position="369"/>
    </location>
    <ligand>
        <name>NAD(+)</name>
        <dbReference type="ChEBI" id="CHEBI:57540"/>
    </ligand>
</feature>
<feature type="binding site" evidence="1">
    <location>
        <position position="393"/>
    </location>
    <ligand>
        <name>UDP-alpha-D-glucuronate</name>
        <dbReference type="ChEBI" id="CHEBI:58052"/>
    </ligand>
</feature>
<feature type="binding site" evidence="1">
    <location>
        <position position="398"/>
    </location>
    <ligand>
        <name>UDP-alpha-D-glucuronate</name>
        <dbReference type="ChEBI" id="CHEBI:58052"/>
    </ligand>
</feature>
<feature type="binding site" evidence="1">
    <location>
        <begin position="432"/>
        <end position="433"/>
    </location>
    <ligand>
        <name>UDP-alpha-D-glucuronate</name>
        <dbReference type="ChEBI" id="CHEBI:58052"/>
    </ligand>
</feature>
<feature type="binding site" evidence="1">
    <location>
        <position position="460"/>
    </location>
    <ligand>
        <name>UDP-alpha-D-glucuronate</name>
        <dbReference type="ChEBI" id="CHEBI:58052"/>
    </ligand>
</feature>
<feature type="binding site" evidence="1">
    <location>
        <position position="492"/>
    </location>
    <ligand>
        <name>UDP-alpha-D-glucuronate</name>
        <dbReference type="ChEBI" id="CHEBI:58052"/>
    </ligand>
</feature>
<feature type="binding site" evidence="1">
    <location>
        <begin position="526"/>
        <end position="535"/>
    </location>
    <ligand>
        <name>UDP-alpha-D-glucuronate</name>
        <dbReference type="ChEBI" id="CHEBI:58052"/>
    </ligand>
</feature>
<feature type="binding site" evidence="1">
    <location>
        <position position="613"/>
    </location>
    <ligand>
        <name>UDP-alpha-D-glucuronate</name>
        <dbReference type="ChEBI" id="CHEBI:58052"/>
    </ligand>
</feature>
<feature type="site" description="Transition state stabilizer" evidence="1">
    <location>
        <position position="102"/>
    </location>
</feature>
<feature type="site" description="Raises pKa of active site His" evidence="1">
    <location>
        <position position="140"/>
    </location>
</feature>
<proteinExistence type="inferred from homology"/>
<name>ARNA_SHIF8</name>
<keyword id="KW-0046">Antibiotic resistance</keyword>
<keyword id="KW-0441">Lipid A biosynthesis</keyword>
<keyword id="KW-0444">Lipid biosynthesis</keyword>
<keyword id="KW-0443">Lipid metabolism</keyword>
<keyword id="KW-0448">Lipopolysaccharide biosynthesis</keyword>
<keyword id="KW-0511">Multifunctional enzyme</keyword>
<keyword id="KW-0520">NAD</keyword>
<keyword id="KW-0560">Oxidoreductase</keyword>
<keyword id="KW-0808">Transferase</keyword>
<dbReference type="EC" id="2.1.2.13" evidence="1"/>
<dbReference type="EC" id="1.1.1.305" evidence="1"/>
<dbReference type="EMBL" id="CP000266">
    <property type="protein sequence ID" value="ABF04437.1"/>
    <property type="molecule type" value="Genomic_DNA"/>
</dbReference>
<dbReference type="RefSeq" id="WP_000860239.1">
    <property type="nucleotide sequence ID" value="NC_008258.1"/>
</dbReference>
<dbReference type="SMR" id="Q0T2M8"/>
<dbReference type="KEGG" id="sfv:SFV_2325"/>
<dbReference type="HOGENOM" id="CLU_007383_23_2_6"/>
<dbReference type="UniPathway" id="UPA00030"/>
<dbReference type="UniPathway" id="UPA00032">
    <property type="reaction ID" value="UER00492"/>
</dbReference>
<dbReference type="UniPathway" id="UPA00032">
    <property type="reaction ID" value="UER00494"/>
</dbReference>
<dbReference type="Proteomes" id="UP000000659">
    <property type="component" value="Chromosome"/>
</dbReference>
<dbReference type="GO" id="GO:0016020">
    <property type="term" value="C:membrane"/>
    <property type="evidence" value="ECO:0007669"/>
    <property type="project" value="GOC"/>
</dbReference>
<dbReference type="GO" id="GO:0016831">
    <property type="term" value="F:carboxy-lyase activity"/>
    <property type="evidence" value="ECO:0007669"/>
    <property type="project" value="InterPro"/>
</dbReference>
<dbReference type="GO" id="GO:0099619">
    <property type="term" value="F:UDP-4-amino-4-deoxy-L-arabinose formyltransferase activity"/>
    <property type="evidence" value="ECO:0007669"/>
    <property type="project" value="UniProtKB-EC"/>
</dbReference>
<dbReference type="GO" id="GO:0099618">
    <property type="term" value="F:UDP-glucuronate dehydrogenase activity"/>
    <property type="evidence" value="ECO:0007669"/>
    <property type="project" value="UniProtKB-EC"/>
</dbReference>
<dbReference type="GO" id="GO:0009245">
    <property type="term" value="P:lipid A biosynthetic process"/>
    <property type="evidence" value="ECO:0007669"/>
    <property type="project" value="UniProtKB-KW"/>
</dbReference>
<dbReference type="GO" id="GO:0009103">
    <property type="term" value="P:lipopolysaccharide biosynthetic process"/>
    <property type="evidence" value="ECO:0007669"/>
    <property type="project" value="UniProtKB-UniRule"/>
</dbReference>
<dbReference type="GO" id="GO:0046677">
    <property type="term" value="P:response to antibiotic"/>
    <property type="evidence" value="ECO:0007669"/>
    <property type="project" value="UniProtKB-KW"/>
</dbReference>
<dbReference type="CDD" id="cd08702">
    <property type="entry name" value="Arna_FMT_C"/>
    <property type="match status" value="1"/>
</dbReference>
<dbReference type="CDD" id="cd05257">
    <property type="entry name" value="Arna_like_SDR_e"/>
    <property type="match status" value="1"/>
</dbReference>
<dbReference type="CDD" id="cd08644">
    <property type="entry name" value="FMT_core_ArnA_N"/>
    <property type="match status" value="1"/>
</dbReference>
<dbReference type="FunFam" id="3.40.50.12230:FF:000002">
    <property type="entry name" value="Bifunctional polymyxin resistance protein ArnA"/>
    <property type="match status" value="1"/>
</dbReference>
<dbReference type="FunFam" id="3.40.50.720:FF:000197">
    <property type="entry name" value="Bifunctional polymyxin resistance protein ArnA"/>
    <property type="match status" value="1"/>
</dbReference>
<dbReference type="Gene3D" id="3.40.50.12230">
    <property type="match status" value="1"/>
</dbReference>
<dbReference type="Gene3D" id="3.40.50.720">
    <property type="entry name" value="NAD(P)-binding Rossmann-like Domain"/>
    <property type="match status" value="1"/>
</dbReference>
<dbReference type="HAMAP" id="MF_01166">
    <property type="entry name" value="ArnA"/>
    <property type="match status" value="1"/>
</dbReference>
<dbReference type="InterPro" id="IPR045869">
    <property type="entry name" value="Arna-like_SDR_e"/>
</dbReference>
<dbReference type="InterPro" id="IPR021168">
    <property type="entry name" value="Bifun_polymyxin_resist_ArnA"/>
</dbReference>
<dbReference type="InterPro" id="IPR001509">
    <property type="entry name" value="Epimerase_deHydtase"/>
</dbReference>
<dbReference type="InterPro" id="IPR005793">
    <property type="entry name" value="Formyl_trans_C"/>
</dbReference>
<dbReference type="InterPro" id="IPR002376">
    <property type="entry name" value="Formyl_transf_N"/>
</dbReference>
<dbReference type="InterPro" id="IPR036477">
    <property type="entry name" value="Formyl_transf_N_sf"/>
</dbReference>
<dbReference type="InterPro" id="IPR011034">
    <property type="entry name" value="Formyl_transferase-like_C_sf"/>
</dbReference>
<dbReference type="InterPro" id="IPR050177">
    <property type="entry name" value="Lipid_A_modif_metabolic_enz"/>
</dbReference>
<dbReference type="InterPro" id="IPR036291">
    <property type="entry name" value="NAD(P)-bd_dom_sf"/>
</dbReference>
<dbReference type="NCBIfam" id="NF005414">
    <property type="entry name" value="PRK06988.1"/>
    <property type="match status" value="1"/>
</dbReference>
<dbReference type="NCBIfam" id="NF005998">
    <property type="entry name" value="PRK08125.1"/>
    <property type="match status" value="1"/>
</dbReference>
<dbReference type="NCBIfam" id="NF008872">
    <property type="entry name" value="PRK11908.1"/>
    <property type="match status" value="1"/>
</dbReference>
<dbReference type="PANTHER" id="PTHR43245">
    <property type="entry name" value="BIFUNCTIONAL POLYMYXIN RESISTANCE PROTEIN ARNA"/>
    <property type="match status" value="1"/>
</dbReference>
<dbReference type="PANTHER" id="PTHR43245:SF13">
    <property type="entry name" value="UDP-D-APIOSE_UDP-D-XYLOSE SYNTHASE 2"/>
    <property type="match status" value="1"/>
</dbReference>
<dbReference type="Pfam" id="PF01370">
    <property type="entry name" value="Epimerase"/>
    <property type="match status" value="1"/>
</dbReference>
<dbReference type="Pfam" id="PF02911">
    <property type="entry name" value="Formyl_trans_C"/>
    <property type="match status" value="1"/>
</dbReference>
<dbReference type="Pfam" id="PF00551">
    <property type="entry name" value="Formyl_trans_N"/>
    <property type="match status" value="1"/>
</dbReference>
<dbReference type="PIRSF" id="PIRSF036506">
    <property type="entry name" value="Bifun_polymyxin_resist_ArnA"/>
    <property type="match status" value="1"/>
</dbReference>
<dbReference type="SUPFAM" id="SSF50486">
    <property type="entry name" value="FMT C-terminal domain-like"/>
    <property type="match status" value="1"/>
</dbReference>
<dbReference type="SUPFAM" id="SSF53328">
    <property type="entry name" value="Formyltransferase"/>
    <property type="match status" value="1"/>
</dbReference>
<dbReference type="SUPFAM" id="SSF51735">
    <property type="entry name" value="NAD(P)-binding Rossmann-fold domains"/>
    <property type="match status" value="1"/>
</dbReference>